<protein>
    <recommendedName>
        <fullName>Tubulin alpha chain, testis-specific</fullName>
        <ecNumber evidence="2">3.6.5.-</ecNumber>
    </recommendedName>
    <component>
        <recommendedName>
            <fullName>Detyrosinated tubulin alpha chain, testis-specific</fullName>
        </recommendedName>
    </component>
</protein>
<name>TBAT_ONCMY</name>
<dbReference type="EC" id="3.6.5.-" evidence="2"/>
<dbReference type="EMBL" id="M36623">
    <property type="protein sequence ID" value="AAA68904.1"/>
    <property type="molecule type" value="mRNA"/>
</dbReference>
<dbReference type="PIR" id="A56622">
    <property type="entry name" value="A56622"/>
</dbReference>
<dbReference type="RefSeq" id="NP_001118163.1">
    <property type="nucleotide sequence ID" value="NM_001124691.1"/>
</dbReference>
<dbReference type="SMR" id="P18288"/>
<dbReference type="Ensembl" id="ENSOMYT00000106599.2">
    <property type="protein sequence ID" value="ENSOMYP00000098167.1"/>
    <property type="gene ID" value="ENSOMYG00000044590.2"/>
</dbReference>
<dbReference type="GeneID" id="100136736"/>
<dbReference type="KEGG" id="omy:100136736"/>
<dbReference type="GeneTree" id="ENSGT00950000182825"/>
<dbReference type="OrthoDB" id="1844at2759"/>
<dbReference type="Proteomes" id="UP000694395">
    <property type="component" value="Chromosome Y"/>
</dbReference>
<dbReference type="GO" id="GO:0005737">
    <property type="term" value="C:cytoplasm"/>
    <property type="evidence" value="ECO:0007669"/>
    <property type="project" value="UniProtKB-KW"/>
</dbReference>
<dbReference type="GO" id="GO:0005874">
    <property type="term" value="C:microtubule"/>
    <property type="evidence" value="ECO:0007669"/>
    <property type="project" value="UniProtKB-KW"/>
</dbReference>
<dbReference type="GO" id="GO:0005525">
    <property type="term" value="F:GTP binding"/>
    <property type="evidence" value="ECO:0007669"/>
    <property type="project" value="UniProtKB-KW"/>
</dbReference>
<dbReference type="GO" id="GO:0016787">
    <property type="term" value="F:hydrolase activity"/>
    <property type="evidence" value="ECO:0007669"/>
    <property type="project" value="UniProtKB-KW"/>
</dbReference>
<dbReference type="GO" id="GO:0046872">
    <property type="term" value="F:metal ion binding"/>
    <property type="evidence" value="ECO:0007669"/>
    <property type="project" value="UniProtKB-KW"/>
</dbReference>
<dbReference type="GO" id="GO:0005200">
    <property type="term" value="F:structural constituent of cytoskeleton"/>
    <property type="evidence" value="ECO:0007669"/>
    <property type="project" value="InterPro"/>
</dbReference>
<dbReference type="GO" id="GO:0007017">
    <property type="term" value="P:microtubule-based process"/>
    <property type="evidence" value="ECO:0007669"/>
    <property type="project" value="InterPro"/>
</dbReference>
<dbReference type="CDD" id="cd02186">
    <property type="entry name" value="alpha_tubulin"/>
    <property type="match status" value="1"/>
</dbReference>
<dbReference type="FunFam" id="1.10.287.600:FF:000005">
    <property type="entry name" value="Tubulin alpha chain"/>
    <property type="match status" value="1"/>
</dbReference>
<dbReference type="FunFam" id="3.30.1330.20:FF:000001">
    <property type="entry name" value="Tubulin alpha chain"/>
    <property type="match status" value="1"/>
</dbReference>
<dbReference type="FunFam" id="3.40.50.1440:FF:000002">
    <property type="entry name" value="Tubulin alpha chain"/>
    <property type="match status" value="1"/>
</dbReference>
<dbReference type="Gene3D" id="1.10.287.600">
    <property type="entry name" value="Helix hairpin bin"/>
    <property type="match status" value="1"/>
</dbReference>
<dbReference type="Gene3D" id="3.30.1330.20">
    <property type="entry name" value="Tubulin/FtsZ, C-terminal domain"/>
    <property type="match status" value="1"/>
</dbReference>
<dbReference type="Gene3D" id="3.40.50.1440">
    <property type="entry name" value="Tubulin/FtsZ, GTPase domain"/>
    <property type="match status" value="1"/>
</dbReference>
<dbReference type="InterPro" id="IPR002452">
    <property type="entry name" value="Alpha_tubulin"/>
</dbReference>
<dbReference type="InterPro" id="IPR008280">
    <property type="entry name" value="Tub_FtsZ_C"/>
</dbReference>
<dbReference type="InterPro" id="IPR000217">
    <property type="entry name" value="Tubulin"/>
</dbReference>
<dbReference type="InterPro" id="IPR037103">
    <property type="entry name" value="Tubulin/FtsZ-like_C"/>
</dbReference>
<dbReference type="InterPro" id="IPR018316">
    <property type="entry name" value="Tubulin/FtsZ_2-layer-sand-dom"/>
</dbReference>
<dbReference type="InterPro" id="IPR036525">
    <property type="entry name" value="Tubulin/FtsZ_GTPase_sf"/>
</dbReference>
<dbReference type="InterPro" id="IPR023123">
    <property type="entry name" value="Tubulin_C"/>
</dbReference>
<dbReference type="InterPro" id="IPR017975">
    <property type="entry name" value="Tubulin_CS"/>
</dbReference>
<dbReference type="InterPro" id="IPR003008">
    <property type="entry name" value="Tubulin_FtsZ_GTPase"/>
</dbReference>
<dbReference type="PANTHER" id="PTHR11588">
    <property type="entry name" value="TUBULIN"/>
    <property type="match status" value="1"/>
</dbReference>
<dbReference type="Pfam" id="PF00091">
    <property type="entry name" value="Tubulin"/>
    <property type="match status" value="1"/>
</dbReference>
<dbReference type="Pfam" id="PF03953">
    <property type="entry name" value="Tubulin_C"/>
    <property type="match status" value="1"/>
</dbReference>
<dbReference type="PRINTS" id="PR01162">
    <property type="entry name" value="ALPHATUBULIN"/>
</dbReference>
<dbReference type="PRINTS" id="PR01161">
    <property type="entry name" value="TUBULIN"/>
</dbReference>
<dbReference type="SMART" id="SM00864">
    <property type="entry name" value="Tubulin"/>
    <property type="match status" value="1"/>
</dbReference>
<dbReference type="SMART" id="SM00865">
    <property type="entry name" value="Tubulin_C"/>
    <property type="match status" value="1"/>
</dbReference>
<dbReference type="SUPFAM" id="SSF55307">
    <property type="entry name" value="Tubulin C-terminal domain-like"/>
    <property type="match status" value="1"/>
</dbReference>
<dbReference type="SUPFAM" id="SSF52490">
    <property type="entry name" value="Tubulin nucleotide-binding domain-like"/>
    <property type="match status" value="1"/>
</dbReference>
<dbReference type="PROSITE" id="PS00227">
    <property type="entry name" value="TUBULIN"/>
    <property type="match status" value="1"/>
</dbReference>
<feature type="chain" id="PRO_0000048205" description="Tubulin alpha chain, testis-specific">
    <location>
        <begin position="1"/>
        <end position="450"/>
    </location>
</feature>
<feature type="chain" id="PRO_0000437407" description="Detyrosinated tubulin alpha chain, testis-specific" evidence="4">
    <location>
        <begin position="1"/>
        <end position="449"/>
    </location>
</feature>
<feature type="short sequence motif" description="MREC motif" evidence="2">
    <location>
        <begin position="1"/>
        <end position="4"/>
    </location>
</feature>
<feature type="active site" evidence="2">
    <location>
        <position position="254"/>
    </location>
</feature>
<feature type="binding site" evidence="2">
    <location>
        <position position="11"/>
    </location>
    <ligand>
        <name>GTP</name>
        <dbReference type="ChEBI" id="CHEBI:37565"/>
    </ligand>
</feature>
<feature type="binding site" evidence="2">
    <location>
        <position position="71"/>
    </location>
    <ligand>
        <name>GTP</name>
        <dbReference type="ChEBI" id="CHEBI:37565"/>
    </ligand>
</feature>
<feature type="binding site" evidence="2">
    <location>
        <position position="71"/>
    </location>
    <ligand>
        <name>Mg(2+)</name>
        <dbReference type="ChEBI" id="CHEBI:18420"/>
    </ligand>
</feature>
<feature type="binding site" evidence="2">
    <location>
        <position position="140"/>
    </location>
    <ligand>
        <name>GTP</name>
        <dbReference type="ChEBI" id="CHEBI:37565"/>
    </ligand>
</feature>
<feature type="binding site" evidence="2">
    <location>
        <position position="144"/>
    </location>
    <ligand>
        <name>GTP</name>
        <dbReference type="ChEBI" id="CHEBI:37565"/>
    </ligand>
</feature>
<feature type="binding site" evidence="2">
    <location>
        <position position="145"/>
    </location>
    <ligand>
        <name>GTP</name>
        <dbReference type="ChEBI" id="CHEBI:37565"/>
    </ligand>
</feature>
<feature type="binding site" evidence="2">
    <location>
        <position position="179"/>
    </location>
    <ligand>
        <name>GTP</name>
        <dbReference type="ChEBI" id="CHEBI:37565"/>
    </ligand>
</feature>
<feature type="binding site" evidence="2">
    <location>
        <position position="206"/>
    </location>
    <ligand>
        <name>GTP</name>
        <dbReference type="ChEBI" id="CHEBI:37565"/>
    </ligand>
</feature>
<feature type="binding site" evidence="2">
    <location>
        <position position="228"/>
    </location>
    <ligand>
        <name>GTP</name>
        <dbReference type="ChEBI" id="CHEBI:37565"/>
    </ligand>
</feature>
<feature type="site" description="Involved in polymerization">
    <location>
        <position position="450"/>
    </location>
</feature>
<feature type="modified residue" description="N6-acetyllysine" evidence="1 4">
    <location>
        <position position="40"/>
    </location>
</feature>
<proteinExistence type="evidence at transcript level"/>
<keyword id="KW-0007">Acetylation</keyword>
<keyword id="KW-0963">Cytoplasm</keyword>
<keyword id="KW-0206">Cytoskeleton</keyword>
<keyword id="KW-0342">GTP-binding</keyword>
<keyword id="KW-0378">Hydrolase</keyword>
<keyword id="KW-0460">Magnesium</keyword>
<keyword id="KW-0479">Metal-binding</keyword>
<keyword id="KW-0493">Microtubule</keyword>
<keyword id="KW-0547">Nucleotide-binding</keyword>
<organism>
    <name type="scientific">Oncorhynchus mykiss</name>
    <name type="common">Rainbow trout</name>
    <name type="synonym">Salmo gairdneri</name>
    <dbReference type="NCBI Taxonomy" id="8022"/>
    <lineage>
        <taxon>Eukaryota</taxon>
        <taxon>Metazoa</taxon>
        <taxon>Chordata</taxon>
        <taxon>Craniata</taxon>
        <taxon>Vertebrata</taxon>
        <taxon>Euteleostomi</taxon>
        <taxon>Actinopterygii</taxon>
        <taxon>Neopterygii</taxon>
        <taxon>Teleostei</taxon>
        <taxon>Protacanthopterygii</taxon>
        <taxon>Salmoniformes</taxon>
        <taxon>Salmonidae</taxon>
        <taxon>Salmoninae</taxon>
        <taxon>Oncorhynchus</taxon>
    </lineage>
</organism>
<comment type="function">
    <text>Tubulin is the major constituent of microtubules, a cylinder consisting of laterally associated linear protofilaments composed of alpha- and beta-tubulin heterodimers. Microtubules grow by the addition of GTP-tubulin dimers to the microtubule end, where a stabilizing cap forms. Below the cap, tubulin dimers are in GDP-bound state, owing to GTPase activity of alpha-tubulin.</text>
</comment>
<comment type="catalytic activity">
    <reaction evidence="2">
        <text>GTP + H2O = GDP + phosphate + H(+)</text>
        <dbReference type="Rhea" id="RHEA:19669"/>
        <dbReference type="ChEBI" id="CHEBI:15377"/>
        <dbReference type="ChEBI" id="CHEBI:15378"/>
        <dbReference type="ChEBI" id="CHEBI:37565"/>
        <dbReference type="ChEBI" id="CHEBI:43474"/>
        <dbReference type="ChEBI" id="CHEBI:58189"/>
    </reaction>
    <physiologicalReaction direction="left-to-right" evidence="2">
        <dbReference type="Rhea" id="RHEA:19670"/>
    </physiologicalReaction>
</comment>
<comment type="cofactor">
    <cofactor evidence="2">
        <name>Mg(2+)</name>
        <dbReference type="ChEBI" id="CHEBI:18420"/>
    </cofactor>
</comment>
<comment type="subunit">
    <text>Dimer of alpha and beta chains. A typical microtubule is a hollow water-filled tube with an outer diameter of 25 nm and an inner diameter of 15 nM. Alpha-beta heterodimers associate head-to-tail to form protofilaments running lengthwise along the microtubule wall with the beta-tubulin subunit facing the microtubule plus end conferring a structural polarity. Microtubules usually have 13 protofilaments but different protofilament numbers can be found in some organisms and specialized cells.</text>
</comment>
<comment type="subcellular location">
    <subcellularLocation>
        <location>Cytoplasm</location>
        <location>Cytoskeleton</location>
    </subcellularLocation>
</comment>
<comment type="tissue specificity">
    <text>Testis specific.</text>
</comment>
<comment type="domain">
    <text evidence="2">The MREC motif may be critical for tubulin autoregulation.</text>
</comment>
<comment type="PTM">
    <text evidence="3">Some glutamate residues at the C-terminus are polyglycylated, resulting in polyglycine chains on the gamma-carboxyl group. Glycylation is mainly limited to tubulin incorporated into axonemes (cilia and flagella) whereas glutamylation is prevalent in neuronal cells, centrioles, axonemes, and the mitotic spindle. Both modifications can coexist on the same protein on adjacent residues, and lowering polyglycylation levels increases polyglutamylation, and reciprocally. The precise function of polyglycylation is still unclear.</text>
</comment>
<comment type="PTM">
    <text evidence="3 4">Some glutamate residues at the C-terminus are polyglutamylated, resulting in polyglutamate chains on the gamma-carboxyl group (By similarity). Polyglutamylation plays a key role in microtubule severing by spastin (SPAST). SPAST preferentially recognizes and acts on microtubules decorated with short polyglutamate tails: severing activity by SPAST increases as the number of glutamates per tubulin rises from one to eight, but decreases beyond this glutamylation threshold (By similarity).</text>
</comment>
<comment type="PTM">
    <text evidence="4">Acetylation of alpha chains at Lys-40 is located inside the microtubule lumen. This modification has been correlated with increased microtubule stability, intracellular transport and ciliary assembly.</text>
</comment>
<comment type="PTM">
    <text evidence="3 4">Undergoes a tyrosination/detyrosination cycle, the cyclic removal and re-addition of a C-terminal tyrosine residue by the enzymes tubulin tyrosine carboxypeptidase (MATCAP, VASH1 or VASH2) and tubulin tyrosine ligase (TTL), respectively.</text>
</comment>
<comment type="PTM">
    <molecule>Tubulin alpha chain, testis-specific</molecule>
    <text evidence="3 4">Tyrosination promotes microtubule interaction with CAP-Gly microtubule plus-end tracking proteins. Tyrosinated tubulins regulate the initiation of dynein-driven motility.</text>
</comment>
<comment type="PTM">
    <molecule>Detyrosinated tubulin alpha chain, testis-specific</molecule>
    <text evidence="3 4">Detyrosination is involved in metaphase plate congression by guiding chromosomes during mitosis (By similarity). Detyrosination increases microtubules-dependent mechanotransduction in dystrophic cardiac and skeletal muscle. In cardiomyocytes, detyrosinated microtubules are required to resist to contractile compression during contraction (By similarity).</text>
</comment>
<comment type="similarity">
    <text evidence="5">Belongs to the tubulin family.</text>
</comment>
<accession>P18288</accession>
<reference key="1">
    <citation type="journal article" date="1991" name="DNA Seq.">
        <title>The predicted protein sequence of a fish testis-specific alpha-tubulin cDNA shows conservation of isotype-specific amino acid substitutions.</title>
        <authorList>
            <person name="Garber A.T."/>
            <person name="Hawkins N."/>
            <person name="Dixon G.H."/>
        </authorList>
    </citation>
    <scope>NUCLEOTIDE SEQUENCE [MRNA]</scope>
</reference>
<evidence type="ECO:0000250" key="1">
    <source>
        <dbReference type="UniProtKB" id="P41351"/>
    </source>
</evidence>
<evidence type="ECO:0000250" key="2">
    <source>
        <dbReference type="UniProtKB" id="P68363"/>
    </source>
</evidence>
<evidence type="ECO:0000250" key="3">
    <source>
        <dbReference type="UniProtKB" id="P68369"/>
    </source>
</evidence>
<evidence type="ECO:0000250" key="4">
    <source>
        <dbReference type="UniProtKB" id="Q71U36"/>
    </source>
</evidence>
<evidence type="ECO:0000305" key="5"/>
<sequence length="450" mass="49994">MRECISIHVGQAGVQIGNACWELYCLEHGIQPDGQMPSDKTIGGGDDSFNTFFSETGAGKHVPRAVFVDLEPTVVDEVRTGTYRQLFHPEQLITGKEDAANNYARGHYTIGKEIVDLVLDRVRKLSDQCTGLQGFLIFHSFGGGTGSGFASLLMERLSVDYGKKSKLEFAIYPAPQVSTAVVEPYNSILTTHTTLEHSDCAFMVDNEAIYDICRRNLDIERPTYTNLNRLIGQIVSSITASLRFDGALNVDLTEFQTNLVPYPRIHFPLVTYAPVISAEKAYHEMLSVAEITNACFEPANQMVKCDPRHGKYMACCMLYRGDVVPKDVNAAIATIKTKRTIQFVDWCPTGFKVGINYQPPTVVPGGDLAKVQRAVCMLSNTTAIAEAWARLDHKFDLMYAKRAFVHWYVGEGMEEGEFSEAREDLAALEKDYEEVGVDSVEGEAEEGEEY</sequence>